<name>CRTC1_HUMAN</name>
<accession>Q6UUV9</accession>
<accession>A6NMG5</accession>
<accession>O75114</accession>
<accession>Q6Y3A3</accession>
<accession>Q7LDZ2</accession>
<accession>Q8IUL3</accession>
<accession>Q8IZ34</accession>
<accession>Q8IZL1</accession>
<accession>Q8N6W3</accession>
<accession>Q96AI8</accession>
<accession>Q9H801</accession>
<evidence type="ECO:0000250" key="1"/>
<evidence type="ECO:0000250" key="2">
    <source>
        <dbReference type="UniProtKB" id="Q157S1"/>
    </source>
</evidence>
<evidence type="ECO:0000250" key="3">
    <source>
        <dbReference type="UniProtKB" id="Q68ED7"/>
    </source>
</evidence>
<evidence type="ECO:0000256" key="4">
    <source>
        <dbReference type="SAM" id="MobiDB-lite"/>
    </source>
</evidence>
<evidence type="ECO:0000269" key="5">
    <source>
    </source>
</evidence>
<evidence type="ECO:0000269" key="6">
    <source>
    </source>
</evidence>
<evidence type="ECO:0000269" key="7">
    <source>
    </source>
</evidence>
<evidence type="ECO:0000269" key="8">
    <source>
    </source>
</evidence>
<evidence type="ECO:0000269" key="9">
    <source>
    </source>
</evidence>
<evidence type="ECO:0000269" key="10">
    <source>
    </source>
</evidence>
<evidence type="ECO:0000269" key="11">
    <source>
    </source>
</evidence>
<evidence type="ECO:0000269" key="12">
    <source>
    </source>
</evidence>
<evidence type="ECO:0000269" key="13">
    <source>
    </source>
</evidence>
<evidence type="ECO:0000269" key="14">
    <source>
    </source>
</evidence>
<evidence type="ECO:0000269" key="15">
    <source>
    </source>
</evidence>
<evidence type="ECO:0000303" key="16">
    <source>
    </source>
</evidence>
<evidence type="ECO:0000303" key="17">
    <source>
    </source>
</evidence>
<evidence type="ECO:0000303" key="18">
    <source>
    </source>
</evidence>
<evidence type="ECO:0000303" key="19">
    <source>
    </source>
</evidence>
<evidence type="ECO:0000303" key="20">
    <source>
    </source>
</evidence>
<evidence type="ECO:0000305" key="21"/>
<evidence type="ECO:0000312" key="22">
    <source>
        <dbReference type="EMBL" id="AAC97072.1"/>
    </source>
</evidence>
<evidence type="ECO:0000312" key="23">
    <source>
        <dbReference type="EMBL" id="AAH23614.2"/>
    </source>
</evidence>
<evidence type="ECO:0000312" key="24">
    <source>
        <dbReference type="EMBL" id="AAH28050.1"/>
    </source>
</evidence>
<evidence type="ECO:0000312" key="25">
    <source>
        <dbReference type="EMBL" id="AAK93832.1"/>
    </source>
</evidence>
<evidence type="ECO:0000312" key="26">
    <source>
        <dbReference type="EMBL" id="AAP12463.1"/>
    </source>
</evidence>
<evidence type="ECO:0000312" key="27">
    <source>
        <dbReference type="EMBL" id="AAQ98856.1"/>
    </source>
</evidence>
<evidence type="ECO:0000312" key="28">
    <source>
        <dbReference type="EMBL" id="BAA31591.1"/>
    </source>
</evidence>
<evidence type="ECO:0000312" key="29">
    <source>
        <dbReference type="EMBL" id="BAB14822.1"/>
    </source>
</evidence>
<evidence type="ECO:0000312" key="30">
    <source>
        <dbReference type="HGNC" id="HGNC:16062"/>
    </source>
</evidence>
<evidence type="ECO:0007744" key="31">
    <source>
    </source>
</evidence>
<evidence type="ECO:0007744" key="32">
    <source>
    </source>
</evidence>
<evidence type="ECO:0007829" key="33">
    <source>
        <dbReference type="PDB" id="7D8P"/>
    </source>
</evidence>
<reference evidence="21 27" key="1">
    <citation type="journal article" date="2003" name="Proc. Natl. Acad. Sci. U.S.A.">
        <title>Identification of a family of cAMP response element-binding protein coactivators by genome-scale functional analysis in mammalian cells.</title>
        <authorList>
            <person name="Iourgenko V."/>
            <person name="Zhang W."/>
            <person name="Mickanin C."/>
            <person name="Daly I."/>
            <person name="Jiang C."/>
            <person name="Hexham J.M."/>
            <person name="Orth A.P."/>
            <person name="Miraglia L."/>
            <person name="Meltzer J."/>
            <person name="Garza D."/>
            <person name="Chirn G.-W."/>
            <person name="McWhinnie E."/>
            <person name="Cohen D."/>
            <person name="Skelton J."/>
            <person name="Terry R."/>
            <person name="Yu Y."/>
            <person name="Bodian D."/>
            <person name="Buxton F.P."/>
            <person name="Zhu J."/>
            <person name="Song C."/>
            <person name="Labow M.A."/>
        </authorList>
    </citation>
    <scope>NUCLEOTIDE SEQUENCE [MRNA] (ISOFORMS 2 AND 3)</scope>
    <scope>FUNCTION</scope>
    <scope>INTERACTION WITH CREB1</scope>
</reference>
<reference evidence="21 25" key="2">
    <citation type="journal article" date="2003" name="Nat. Genet.">
        <title>t(11;19)(q21;p13) translocation in mucoepidermoid carcinoma creates a novel fusion product that disrupts a Notch signaling pathway.</title>
        <authorList>
            <person name="Tonon G."/>
            <person name="Modi S."/>
            <person name="Wu L."/>
            <person name="Kubo A."/>
            <person name="Coxon A.B."/>
            <person name="Komiya T."/>
            <person name="O'Neil K."/>
            <person name="Stover K."/>
            <person name="El-Naggar A."/>
            <person name="Griffin J.D."/>
            <person name="Kirsch I.R."/>
            <person name="Kaye F.J."/>
        </authorList>
    </citation>
    <scope>NUCLEOTIDE SEQUENCE [MRNA] (ISOFORM 3)</scope>
    <scope>CHROMOSOMAL TRANSLOCATION WITH MAML2</scope>
</reference>
<reference key="3">
    <citation type="journal article" date="2003" name="Nat. Genet.">
        <authorList>
            <person name="Tonon G."/>
            <person name="Modi S."/>
            <person name="Wu L."/>
            <person name="Kubo A."/>
            <person name="Coxon A.B."/>
            <person name="Komiya T."/>
            <person name="O'Neil K."/>
            <person name="Stover K."/>
            <person name="El-Naggar A."/>
            <person name="Griffin J.D."/>
            <person name="Kirsch I.R."/>
            <person name="Kaye F.J."/>
        </authorList>
    </citation>
    <scope>ERRATUM OF PUBMED:12539049</scope>
</reference>
<reference evidence="21 29" key="4">
    <citation type="journal article" date="2004" name="Nat. Genet.">
        <title>Complete sequencing and characterization of 21,243 full-length human cDNAs.</title>
        <authorList>
            <person name="Ota T."/>
            <person name="Suzuki Y."/>
            <person name="Nishikawa T."/>
            <person name="Otsuki T."/>
            <person name="Sugiyama T."/>
            <person name="Irie R."/>
            <person name="Wakamatsu A."/>
            <person name="Hayashi K."/>
            <person name="Sato H."/>
            <person name="Nagai K."/>
            <person name="Kimura K."/>
            <person name="Makita H."/>
            <person name="Sekine M."/>
            <person name="Obayashi M."/>
            <person name="Nishi T."/>
            <person name="Shibahara T."/>
            <person name="Tanaka T."/>
            <person name="Ishii S."/>
            <person name="Yamamoto J."/>
            <person name="Saito K."/>
            <person name="Kawai Y."/>
            <person name="Isono Y."/>
            <person name="Nakamura Y."/>
            <person name="Nagahari K."/>
            <person name="Murakami K."/>
            <person name="Yasuda T."/>
            <person name="Iwayanagi T."/>
            <person name="Wagatsuma M."/>
            <person name="Shiratori A."/>
            <person name="Sudo H."/>
            <person name="Hosoiri T."/>
            <person name="Kaku Y."/>
            <person name="Kodaira H."/>
            <person name="Kondo H."/>
            <person name="Sugawara M."/>
            <person name="Takahashi M."/>
            <person name="Kanda K."/>
            <person name="Yokoi T."/>
            <person name="Furuya T."/>
            <person name="Kikkawa E."/>
            <person name="Omura Y."/>
            <person name="Abe K."/>
            <person name="Kamihara K."/>
            <person name="Katsuta N."/>
            <person name="Sato K."/>
            <person name="Tanikawa M."/>
            <person name="Yamazaki M."/>
            <person name="Ninomiya K."/>
            <person name="Ishibashi T."/>
            <person name="Yamashita H."/>
            <person name="Murakawa K."/>
            <person name="Fujimori K."/>
            <person name="Tanai H."/>
            <person name="Kimata M."/>
            <person name="Watanabe M."/>
            <person name="Hiraoka S."/>
            <person name="Chiba Y."/>
            <person name="Ishida S."/>
            <person name="Ono Y."/>
            <person name="Takiguchi S."/>
            <person name="Watanabe S."/>
            <person name="Yosida M."/>
            <person name="Hotuta T."/>
            <person name="Kusano J."/>
            <person name="Kanehori K."/>
            <person name="Takahashi-Fujii A."/>
            <person name="Hara H."/>
            <person name="Tanase T.-O."/>
            <person name="Nomura Y."/>
            <person name="Togiya S."/>
            <person name="Komai F."/>
            <person name="Hara R."/>
            <person name="Takeuchi K."/>
            <person name="Arita M."/>
            <person name="Imose N."/>
            <person name="Musashino K."/>
            <person name="Yuuki H."/>
            <person name="Oshima A."/>
            <person name="Sasaki N."/>
            <person name="Aotsuka S."/>
            <person name="Yoshikawa Y."/>
            <person name="Matsunawa H."/>
            <person name="Ichihara T."/>
            <person name="Shiohata N."/>
            <person name="Sano S."/>
            <person name="Moriya S."/>
            <person name="Momiyama H."/>
            <person name="Satoh N."/>
            <person name="Takami S."/>
            <person name="Terashima Y."/>
            <person name="Suzuki O."/>
            <person name="Nakagawa S."/>
            <person name="Senoh A."/>
            <person name="Mizoguchi H."/>
            <person name="Goto Y."/>
            <person name="Shimizu F."/>
            <person name="Wakebe H."/>
            <person name="Hishigaki H."/>
            <person name="Watanabe T."/>
            <person name="Sugiyama A."/>
            <person name="Takemoto M."/>
            <person name="Kawakami B."/>
            <person name="Yamazaki M."/>
            <person name="Watanabe K."/>
            <person name="Kumagai A."/>
            <person name="Itakura S."/>
            <person name="Fukuzumi Y."/>
            <person name="Fujimori Y."/>
            <person name="Komiyama M."/>
            <person name="Tashiro H."/>
            <person name="Tanigami A."/>
            <person name="Fujiwara T."/>
            <person name="Ono T."/>
            <person name="Yamada K."/>
            <person name="Fujii Y."/>
            <person name="Ozaki K."/>
            <person name="Hirao M."/>
            <person name="Ohmori Y."/>
            <person name="Kawabata A."/>
            <person name="Hikiji T."/>
            <person name="Kobatake N."/>
            <person name="Inagaki H."/>
            <person name="Ikema Y."/>
            <person name="Okamoto S."/>
            <person name="Okitani R."/>
            <person name="Kawakami T."/>
            <person name="Noguchi S."/>
            <person name="Itoh T."/>
            <person name="Shigeta K."/>
            <person name="Senba T."/>
            <person name="Matsumura K."/>
            <person name="Nakajima Y."/>
            <person name="Mizuno T."/>
            <person name="Morinaga M."/>
            <person name="Sasaki M."/>
            <person name="Togashi T."/>
            <person name="Oyama M."/>
            <person name="Hata H."/>
            <person name="Watanabe M."/>
            <person name="Komatsu T."/>
            <person name="Mizushima-Sugano J."/>
            <person name="Satoh T."/>
            <person name="Shirai Y."/>
            <person name="Takahashi Y."/>
            <person name="Nakagawa K."/>
            <person name="Okumura K."/>
            <person name="Nagase T."/>
            <person name="Nomura N."/>
            <person name="Kikuchi H."/>
            <person name="Masuho Y."/>
            <person name="Yamashita R."/>
            <person name="Nakai K."/>
            <person name="Yada T."/>
            <person name="Nakamura Y."/>
            <person name="Ohara O."/>
            <person name="Isogai T."/>
            <person name="Sugano S."/>
        </authorList>
    </citation>
    <scope>NUCLEOTIDE SEQUENCE [LARGE SCALE MRNA] (ISOFORM 3)</scope>
    <source>
        <tissue evidence="29">Embryo</tissue>
    </source>
</reference>
<reference evidence="21 22" key="5">
    <citation type="journal article" date="2004" name="Nature">
        <title>The DNA sequence and biology of human chromosome 19.</title>
        <authorList>
            <person name="Grimwood J."/>
            <person name="Gordon L.A."/>
            <person name="Olsen A.S."/>
            <person name="Terry A."/>
            <person name="Schmutz J."/>
            <person name="Lamerdin J.E."/>
            <person name="Hellsten U."/>
            <person name="Goodstein D."/>
            <person name="Couronne O."/>
            <person name="Tran-Gyamfi M."/>
            <person name="Aerts A."/>
            <person name="Altherr M."/>
            <person name="Ashworth L."/>
            <person name="Bajorek E."/>
            <person name="Black S."/>
            <person name="Branscomb E."/>
            <person name="Caenepeel S."/>
            <person name="Carrano A.V."/>
            <person name="Caoile C."/>
            <person name="Chan Y.M."/>
            <person name="Christensen M."/>
            <person name="Cleland C.A."/>
            <person name="Copeland A."/>
            <person name="Dalin E."/>
            <person name="Dehal P."/>
            <person name="Denys M."/>
            <person name="Detter J.C."/>
            <person name="Escobar J."/>
            <person name="Flowers D."/>
            <person name="Fotopulos D."/>
            <person name="Garcia C."/>
            <person name="Georgescu A.M."/>
            <person name="Glavina T."/>
            <person name="Gomez M."/>
            <person name="Gonzales E."/>
            <person name="Groza M."/>
            <person name="Hammon N."/>
            <person name="Hawkins T."/>
            <person name="Haydu L."/>
            <person name="Ho I."/>
            <person name="Huang W."/>
            <person name="Israni S."/>
            <person name="Jett J."/>
            <person name="Kadner K."/>
            <person name="Kimball H."/>
            <person name="Kobayashi A."/>
            <person name="Larionov V."/>
            <person name="Leem S.-H."/>
            <person name="Lopez F."/>
            <person name="Lou Y."/>
            <person name="Lowry S."/>
            <person name="Malfatti S."/>
            <person name="Martinez D."/>
            <person name="McCready P.M."/>
            <person name="Medina C."/>
            <person name="Morgan J."/>
            <person name="Nelson K."/>
            <person name="Nolan M."/>
            <person name="Ovcharenko I."/>
            <person name="Pitluck S."/>
            <person name="Pollard M."/>
            <person name="Popkie A.P."/>
            <person name="Predki P."/>
            <person name="Quan G."/>
            <person name="Ramirez L."/>
            <person name="Rash S."/>
            <person name="Retterer J."/>
            <person name="Rodriguez A."/>
            <person name="Rogers S."/>
            <person name="Salamov A."/>
            <person name="Salazar A."/>
            <person name="She X."/>
            <person name="Smith D."/>
            <person name="Slezak T."/>
            <person name="Solovyev V."/>
            <person name="Thayer N."/>
            <person name="Tice H."/>
            <person name="Tsai M."/>
            <person name="Ustaszewska A."/>
            <person name="Vo N."/>
            <person name="Wagner M."/>
            <person name="Wheeler J."/>
            <person name="Wu K."/>
            <person name="Xie G."/>
            <person name="Yang J."/>
            <person name="Dubchak I."/>
            <person name="Furey T.S."/>
            <person name="DeJong P."/>
            <person name="Dickson M."/>
            <person name="Gordon D."/>
            <person name="Eichler E.E."/>
            <person name="Pennacchio L.A."/>
            <person name="Richardson P."/>
            <person name="Stubbs L."/>
            <person name="Rokhsar D.S."/>
            <person name="Myers R.M."/>
            <person name="Rubin E.M."/>
            <person name="Lucas S.M."/>
        </authorList>
    </citation>
    <scope>NUCLEOTIDE SEQUENCE [LARGE SCALE GENOMIC DNA]</scope>
</reference>
<reference key="6">
    <citation type="submission" date="2005-07" db="EMBL/GenBank/DDBJ databases">
        <authorList>
            <person name="Mural R.J."/>
            <person name="Istrail S."/>
            <person name="Sutton G.G."/>
            <person name="Florea L."/>
            <person name="Halpern A.L."/>
            <person name="Mobarry C.M."/>
            <person name="Lippert R."/>
            <person name="Walenz B."/>
            <person name="Shatkay H."/>
            <person name="Dew I."/>
            <person name="Miller J.R."/>
            <person name="Flanigan M.J."/>
            <person name="Edwards N.J."/>
            <person name="Bolanos R."/>
            <person name="Fasulo D."/>
            <person name="Halldorsson B.V."/>
            <person name="Hannenhalli S."/>
            <person name="Turner R."/>
            <person name="Yooseph S."/>
            <person name="Lu F."/>
            <person name="Nusskern D.R."/>
            <person name="Shue B.C."/>
            <person name="Zheng X.H."/>
            <person name="Zhong F."/>
            <person name="Delcher A.L."/>
            <person name="Huson D.H."/>
            <person name="Kravitz S.A."/>
            <person name="Mouchard L."/>
            <person name="Reinert K."/>
            <person name="Remington K.A."/>
            <person name="Clark A.G."/>
            <person name="Waterman M.S."/>
            <person name="Eichler E.E."/>
            <person name="Adams M.D."/>
            <person name="Hunkapiller M.W."/>
            <person name="Myers E.W."/>
            <person name="Venter J.C."/>
        </authorList>
    </citation>
    <scope>NUCLEOTIDE SEQUENCE [LARGE SCALE GENOMIC DNA]</scope>
</reference>
<reference evidence="21 24" key="7">
    <citation type="journal article" date="2004" name="Genome Res.">
        <title>The status, quality, and expansion of the NIH full-length cDNA project: the Mammalian Gene Collection (MGC).</title>
        <authorList>
            <consortium name="The MGC Project Team"/>
        </authorList>
    </citation>
    <scope>NUCLEOTIDE SEQUENCE [LARGE SCALE MRNA] (ISOFORM 1)</scope>
    <scope>VARIANTS ILE-311 AND ALA-328</scope>
    <source>
        <tissue evidence="24">Brain</tissue>
        <tissue>Colon</tissue>
        <tissue evidence="23">Eye</tissue>
    </source>
</reference>
<reference evidence="21 26" key="8">
    <citation type="journal article" date="2004" name="Exp. Cell Res.">
        <title>Altered Notch signaling resulting from expression of a WAMTP1-MAML2 gene fusion in mucoepidermoid carcinomas and benign Warthin's tumors.</title>
        <authorList>
            <person name="Enlund F."/>
            <person name="Behboudi A."/>
            <person name="Andren Y."/>
            <person name="Oberg C."/>
            <person name="Lendahl U."/>
            <person name="Mark J."/>
            <person name="Stenman G."/>
        </authorList>
    </citation>
    <scope>NUCLEOTIDE SEQUENCE [MRNA] OF 1-104 (ISOFORMS 1/3)</scope>
    <scope>TISSUE SPECIFICITY</scope>
    <scope>CHROMOSOMAL TRANSLOCATION WITH MAML2</scope>
    <source>
        <tissue evidence="8">Carcinoma</tissue>
    </source>
</reference>
<reference evidence="21 28" key="9">
    <citation type="journal article" date="1998" name="DNA Res.">
        <title>Prediction of the coding sequences of unidentified human genes. X. The complete sequences of 100 new cDNA clones from brain which can code for large proteins in vitro.</title>
        <authorList>
            <person name="Ishikawa K."/>
            <person name="Nagase T."/>
            <person name="Suyama M."/>
            <person name="Miyajima N."/>
            <person name="Tanaka A."/>
            <person name="Kotani H."/>
            <person name="Nomura N."/>
            <person name="Ohara O."/>
        </authorList>
    </citation>
    <scope>NUCLEOTIDE SEQUENCE [LARGE SCALE MRNA] OF 17-634 (ISOFORM 2)</scope>
    <source>
        <tissue evidence="28">Brain</tissue>
    </source>
</reference>
<reference evidence="21" key="10">
    <citation type="journal article" date="2003" name="Mol. Cell">
        <title>TORCs: transducers of regulated CREB activity.</title>
        <authorList>
            <person name="Conkright M.D."/>
            <person name="Canettieri G."/>
            <person name="Screaton R."/>
            <person name="Guzman E."/>
            <person name="Miraglia L."/>
            <person name="Hogenesch J.B."/>
            <person name="Montminy M."/>
        </authorList>
    </citation>
    <scope>FUNCTION</scope>
    <scope>SUBUNIT</scope>
    <scope>INTERACTION WITH CREB1 AND TAF4</scope>
</reference>
<reference key="11">
    <citation type="journal article" date="2004" name="Curr. Biol.">
        <title>Activation of cAMP response element-mediated gene expression by regulated nuclear transport of TORC proteins.</title>
        <authorList>
            <person name="Bittinger M.A."/>
            <person name="McWhinnie E."/>
            <person name="Meltzer J."/>
            <person name="Iourgenko V."/>
            <person name="Latario B."/>
            <person name="Liu X."/>
            <person name="Chen C.H."/>
            <person name="Song C."/>
            <person name="Garza D."/>
            <person name="Labow M."/>
        </authorList>
    </citation>
    <scope>SUBCELLULAR LOCATION</scope>
    <scope>PHOSPHORYLATION</scope>
</reference>
<reference evidence="21" key="12">
    <citation type="journal article" date="2005" name="Genes Chromosomes Cancer">
        <title>Clear cell hidradenoma of the skin-a third tumor type with a t(11;19)-associated TORC1-MAML2 gene fusion.</title>
        <authorList>
            <person name="Behboudi A."/>
            <person name="Winnes M."/>
            <person name="Gorunova L."/>
            <person name="van den Oord J.J."/>
            <person name="Mertens F."/>
            <person name="Enlund F."/>
            <person name="Stenman G."/>
        </authorList>
    </citation>
    <scope>CHROMOSOMAL TRANSLOCATION</scope>
</reference>
<reference key="13">
    <citation type="journal article" date="2006" name="FEBS J.">
        <title>Silencing the constitutive active transcription factor CREB by the LKB1-SIK signaling cascade.</title>
        <authorList>
            <person name="Katoh Y."/>
            <person name="Takemori H."/>
            <person name="Lin X.-Z."/>
            <person name="Tamura M."/>
            <person name="Muraoka M."/>
            <person name="Satoh T."/>
            <person name="Tsuchiya Y."/>
            <person name="Min L."/>
            <person name="Doi J."/>
            <person name="Miyauchi A."/>
            <person name="Witters L.A."/>
            <person name="Nakamura H."/>
            <person name="Okamoto M."/>
        </authorList>
    </citation>
    <scope>FUNCTION</scope>
    <scope>PHOSPHORYLATION AT SER-151</scope>
    <scope>SUBCELLULAR LOCATION</scope>
</reference>
<reference key="14">
    <citation type="journal article" date="2006" name="J. Virol.">
        <title>TORC1 and TORC2 coactivators are required for tax activation of the human T-cell leukemia virus type 1 long terminal repeats.</title>
        <authorList>
            <person name="Siu Y.-T."/>
            <person name="Chin K.-T."/>
            <person name="Siu K.-L."/>
            <person name="Yee Wai Choy E."/>
            <person name="Jeang K.-T."/>
            <person name="Jin D.-Y."/>
        </authorList>
    </citation>
    <scope>INTERACTION WITH HTLV-1 TAX (MICROBIAL INFECTION)</scope>
    <scope>FUNCTION (MICROBIAL INFECTION)</scope>
</reference>
<reference key="15">
    <citation type="journal article" date="2006" name="Proc. Natl. Acad. Sci. U.S.A.">
        <title>Transducer of regulated CREB-binding proteins (TORCs) induce PGC-1alpha transcription and mitochondrial biogenesis in muscle cells.</title>
        <authorList>
            <person name="Wu Z."/>
            <person name="Huang X."/>
            <person name="Feng Y."/>
            <person name="Handschin C."/>
            <person name="Feng Y."/>
            <person name="Gullicksen P.S."/>
            <person name="Bare O."/>
            <person name="Labow M."/>
            <person name="Spiegelman B."/>
            <person name="Stevenson S.C."/>
        </authorList>
    </citation>
    <scope>FUNCTION</scope>
    <scope>TISSUE SPECIFICITY</scope>
</reference>
<reference key="16">
    <citation type="journal article" date="2007" name="Mol. Cell. Endocrinol.">
        <title>Dephosphorylation of TORC initiates expression of the StAR gene.</title>
        <authorList>
            <person name="Takemori H."/>
            <person name="Kanematsu M."/>
            <person name="Kajimura J."/>
            <person name="Hatano O."/>
            <person name="Katoh Y."/>
            <person name="Lin X.-Z."/>
            <person name="Min L."/>
            <person name="Yamazaki T."/>
            <person name="Doi J."/>
            <person name="Okamoto M."/>
        </authorList>
    </citation>
    <scope>FUNCTION</scope>
</reference>
<reference key="17">
    <citation type="journal article" date="2007" name="Science">
        <title>ATM and ATR substrate analysis reveals extensive protein networks responsive to DNA damage.</title>
        <authorList>
            <person name="Matsuoka S."/>
            <person name="Ballif B.A."/>
            <person name="Smogorzewska A."/>
            <person name="McDonald E.R. III"/>
            <person name="Hurov K.E."/>
            <person name="Luo J."/>
            <person name="Bakalarski C.E."/>
            <person name="Zhao Z."/>
            <person name="Solimini N."/>
            <person name="Lerenthal Y."/>
            <person name="Shiloh Y."/>
            <person name="Gygi S.P."/>
            <person name="Elledge S.J."/>
        </authorList>
    </citation>
    <scope>IDENTIFICATION BY MASS SPECTROMETRY [LARGE SCALE ANALYSIS]</scope>
    <source>
        <tissue>Embryonic kidney</tissue>
    </source>
</reference>
<reference key="18">
    <citation type="journal article" date="2008" name="Proc. Natl. Acad. Sci. U.S.A.">
        <title>A quantitative atlas of mitotic phosphorylation.</title>
        <authorList>
            <person name="Dephoure N."/>
            <person name="Zhou C."/>
            <person name="Villen J."/>
            <person name="Beausoleil S.A."/>
            <person name="Bakalarski C.E."/>
            <person name="Elledge S.J."/>
            <person name="Gygi S.P."/>
        </authorList>
    </citation>
    <scope>PHOSPHORYLATION [LARGE SCALE ANALYSIS] AT THR-161</scope>
    <scope>IDENTIFICATION BY MASS SPECTROMETRY [LARGE SCALE ANALYSIS]</scope>
    <source>
        <tissue>Cervix carcinoma</tissue>
    </source>
</reference>
<reference key="19">
    <citation type="journal article" date="2009" name="Sci. Signal.">
        <title>Quantitative phosphoproteomic analysis of T cell receptor signaling reveals system-wide modulation of protein-protein interactions.</title>
        <authorList>
            <person name="Mayya V."/>
            <person name="Lundgren D.H."/>
            <person name="Hwang S.-I."/>
            <person name="Rezaul K."/>
            <person name="Wu L."/>
            <person name="Eng J.K."/>
            <person name="Rodionov V."/>
            <person name="Han D.K."/>
        </authorList>
    </citation>
    <scope>IDENTIFICATION BY MASS SPECTROMETRY [LARGE SCALE ANALYSIS]</scope>
    <source>
        <tissue>Leukemic T-cell</tissue>
    </source>
</reference>
<reference key="20">
    <citation type="journal article" date="2013" name="J. Neurosci.">
        <title>Clock and light regulation of the CREB coactivator CRTC1 in the suprachiasmatic circadian clock.</title>
        <authorList>
            <person name="Sakamoto K."/>
            <person name="Norona F.E."/>
            <person name="Alzate-Correa D."/>
            <person name="Scarberry D."/>
            <person name="Hoyt K.R."/>
            <person name="Obrietan K."/>
        </authorList>
    </citation>
    <scope>FUNCTION</scope>
</reference>
<reference key="21">
    <citation type="journal article" date="2013" name="J. Proteome Res.">
        <title>Toward a comprehensive characterization of a human cancer cell phosphoproteome.</title>
        <authorList>
            <person name="Zhou H."/>
            <person name="Di Palma S."/>
            <person name="Preisinger C."/>
            <person name="Peng M."/>
            <person name="Polat A.N."/>
            <person name="Heck A.J."/>
            <person name="Mohammed S."/>
        </authorList>
    </citation>
    <scope>PHOSPHORYLATION [LARGE SCALE ANALYSIS] AT SER-113</scope>
    <scope>IDENTIFICATION BY MASS SPECTROMETRY [LARGE SCALE ANALYSIS]</scope>
    <source>
        <tissue>Cervix carcinoma</tissue>
        <tissue>Erythroleukemia</tissue>
    </source>
</reference>
<reference key="22">
    <citation type="journal article" date="2014" name="J. Proteomics">
        <title>An enzyme assisted RP-RPLC approach for in-depth analysis of human liver phosphoproteome.</title>
        <authorList>
            <person name="Bian Y."/>
            <person name="Song C."/>
            <person name="Cheng K."/>
            <person name="Dong M."/>
            <person name="Wang F."/>
            <person name="Huang J."/>
            <person name="Sun D."/>
            <person name="Wang L."/>
            <person name="Ye M."/>
            <person name="Zou H."/>
        </authorList>
    </citation>
    <scope>IDENTIFICATION BY MASS SPECTROMETRY [LARGE SCALE ANALYSIS]</scope>
    <source>
        <tissue>Liver</tissue>
    </source>
</reference>
<reference key="23">
    <citation type="journal article" date="2018" name="IScience">
        <title>Mitogenic Signals Stimulate the CREB Coactivator CRTC3 through PP2A Recruitment.</title>
        <authorList>
            <person name="Sonntag T."/>
            <person name="Ostojic J."/>
            <person name="Vaughan J.M."/>
            <person name="Moresco J.J."/>
            <person name="Yoon Y.S."/>
            <person name="Yates J.R. III"/>
            <person name="Montminy M."/>
        </authorList>
    </citation>
    <scope>INTERACTION WITH YWHAE AND PPP3CA</scope>
    <scope>IDENTIFICATION BY MASS SPECTROMETRY</scope>
</reference>
<proteinExistence type="evidence at protein level"/>
<sequence>MATSNNPRKFSEKIALHNQKQAEETAAFEEVMKDLSLTRAARLQLQKSQYLQLGPSRGQYYGGSLPNVNQIGSGTMDLPFQTPFQSSGLDTSRTTRHHGLVDRVYRERGRLGSPHRRPLSVDKHGRQADSCPYGTMYLSPPADTSWRRTNSDSALHQSTMTPTQPESFSSGSQDVHQKRVLLLTVPGMEETTSEADKNLSKQAWDTKKTGSRPKSCEVPGINIFPSADQENTTALIPATHNTGGSLPDLTNIHFPSPLPTPLDPEEPTFPALSSSSSTGNLAANLTHLGIGGAGQGMSTPGSSPQHRPAGVSPLSLSTEARRQQASPTLSPLSPITQAVAMDALSLEQQLPYAFFTQAGSQQPPPQPQPPPPPPPASQQPPPPPPPQAPVRLPPGGPLLPSASLTRGPQPPPLAVTVPSSLPQSPPENPGQPSMGIDIASAPALQQYRTSAGSPANQSPTSPVSNQGFSPGSSPQHTSTLGSVFGDAYYEQQMAARQANALSHQLEQFNMMENAISSSSLYSPGSTLNYSQAAMMGLTGSHGSLPDSQQLGYASHSGIPNIILTVTGESPPSLSKELTSSLAGVGDVSFDSDSQFPLDELKIDPLTLDGLHMLNDPDMVLADPATEDTFRMDRL</sequence>
<feature type="chain" id="PRO_0000096354" description="CREB-regulated transcription coactivator 1">
    <location>
        <begin position="1"/>
        <end position="634"/>
    </location>
</feature>
<feature type="region of interest" description="Disordered" evidence="4">
    <location>
        <begin position="110"/>
        <end position="174"/>
    </location>
</feature>
<feature type="region of interest" description="Disordered" evidence="4">
    <location>
        <begin position="191"/>
        <end position="221"/>
    </location>
</feature>
<feature type="region of interest" description="Disordered" evidence="4">
    <location>
        <begin position="258"/>
        <end position="331"/>
    </location>
</feature>
<feature type="region of interest" description="Disordered" evidence="4">
    <location>
        <begin position="357"/>
        <end position="479"/>
    </location>
</feature>
<feature type="short sequence motif" description="Nuclear export signal" evidence="1">
    <location>
        <begin position="242"/>
        <end position="258"/>
    </location>
</feature>
<feature type="compositionally biased region" description="Polar residues" evidence="4">
    <location>
        <begin position="151"/>
        <end position="174"/>
    </location>
</feature>
<feature type="compositionally biased region" description="Basic and acidic residues" evidence="4">
    <location>
        <begin position="194"/>
        <end position="208"/>
    </location>
</feature>
<feature type="compositionally biased region" description="Polar residues" evidence="4">
    <location>
        <begin position="271"/>
        <end position="283"/>
    </location>
</feature>
<feature type="compositionally biased region" description="Polar residues" evidence="4">
    <location>
        <begin position="296"/>
        <end position="305"/>
    </location>
</feature>
<feature type="compositionally biased region" description="Polar residues" evidence="4">
    <location>
        <begin position="314"/>
        <end position="331"/>
    </location>
</feature>
<feature type="compositionally biased region" description="Pro residues" evidence="4">
    <location>
        <begin position="362"/>
        <end position="397"/>
    </location>
</feature>
<feature type="compositionally biased region" description="Polar residues" evidence="4">
    <location>
        <begin position="446"/>
        <end position="479"/>
    </location>
</feature>
<feature type="site" description="Breakpoint for translocation to form the MECT1-MAML2 and MAML2-MECT1 fusion proteins" evidence="5 8">
    <location>
        <begin position="42"/>
        <end position="43"/>
    </location>
</feature>
<feature type="site" description="Required for ubiquitination and degradation" evidence="1">
    <location>
        <position position="575"/>
    </location>
</feature>
<feature type="modified residue" description="Phosphoserine" evidence="3">
    <location>
        <position position="64"/>
    </location>
</feature>
<feature type="modified residue" description="Phosphoserine" evidence="32">
    <location>
        <position position="113"/>
    </location>
</feature>
<feature type="modified residue" description="Phosphothreonine" evidence="3">
    <location>
        <position position="149"/>
    </location>
</feature>
<feature type="modified residue" description="Phosphoserine; by SIK1 and SIK2" evidence="12">
    <location>
        <position position="151"/>
    </location>
</feature>
<feature type="modified residue" description="Phosphothreonine" evidence="31">
    <location>
        <position position="161"/>
    </location>
</feature>
<feature type="splice variant" id="VSP_051749" description="In isoform 2." evidence="17 20">
    <original>Q</original>
    <variation>QPSGFLGEALAAAPVSL</variation>
    <location>
        <position position="81"/>
    </location>
</feature>
<feature type="splice variant" id="VSP_051750" description="In isoform 3." evidence="16 17 18">
    <location>
        <begin position="475"/>
        <end position="503"/>
    </location>
</feature>
<feature type="splice variant" id="VSP_051751" description="In isoform 3." evidence="16 17 18">
    <original>SLAGVGDVSFDSDSQFPLDELKIDPLTLDGLHMLNDPDMVLADPATEDTFRMDRL</original>
    <variation>HRGHLPDGPPVSGHAGTLPLSRPDGASPARGRPCSVPRQRPSL</variation>
    <location>
        <begin position="580"/>
        <end position="634"/>
    </location>
</feature>
<feature type="sequence variant" id="VAR_053934" description="In dbSNP:rs3746266.">
    <original>T</original>
    <variation>A</variation>
    <location>
        <position position="286"/>
    </location>
</feature>
<feature type="sequence variant" id="VAR_053935" description="In dbSNP:rs36070283." evidence="9">
    <original>V</original>
    <variation>I</variation>
    <location>
        <position position="311"/>
    </location>
</feature>
<feature type="sequence variant" id="VAR_053936" description="In dbSNP:rs3746266." evidence="9">
    <original>T</original>
    <variation>A</variation>
    <location>
        <position position="328"/>
    </location>
</feature>
<feature type="sequence conflict" description="In Ref. 4; BAB14822." evidence="21" ref="4">
    <original>F</original>
    <variation>S</variation>
    <location>
        <position position="84"/>
    </location>
</feature>
<feature type="sequence conflict" description="In Ref. 4; BAB14822." evidence="21" ref="4">
    <original>P</original>
    <variation>S</variation>
    <location>
        <position position="384"/>
    </location>
</feature>
<feature type="sequence conflict" description="In Ref. 4; BAB14822." evidence="21" ref="4">
    <original>S</original>
    <variation>G</variation>
    <location>
        <position position="556"/>
    </location>
</feature>
<feature type="helix" evidence="33">
    <location>
        <begin position="152"/>
        <end position="155"/>
    </location>
</feature>
<dbReference type="EMBL" id="AY360171">
    <property type="protein sequence ID" value="AAQ98856.1"/>
    <property type="molecule type" value="mRNA"/>
</dbReference>
<dbReference type="EMBL" id="AY040323">
    <property type="protein sequence ID" value="AAK93832.1"/>
    <property type="molecule type" value="mRNA"/>
</dbReference>
<dbReference type="EMBL" id="AY040324">
    <property type="protein sequence ID" value="AAK93833.1"/>
    <property type="status" value="ALT_TERM"/>
    <property type="molecule type" value="mRNA"/>
</dbReference>
<dbReference type="EMBL" id="AK024089">
    <property type="protein sequence ID" value="BAB14822.1"/>
    <property type="molecule type" value="mRNA"/>
</dbReference>
<dbReference type="EMBL" id="AC003107">
    <property type="status" value="NOT_ANNOTATED_CDS"/>
    <property type="molecule type" value="Genomic_DNA"/>
</dbReference>
<dbReference type="EMBL" id="AC004476">
    <property type="status" value="NOT_ANNOTATED_CDS"/>
    <property type="molecule type" value="Genomic_DNA"/>
</dbReference>
<dbReference type="EMBL" id="AC006123">
    <property type="protein sequence ID" value="AAC97072.1"/>
    <property type="molecule type" value="Genomic_DNA"/>
</dbReference>
<dbReference type="EMBL" id="CH471106">
    <property type="protein sequence ID" value="EAW84730.1"/>
    <property type="molecule type" value="Genomic_DNA"/>
</dbReference>
<dbReference type="EMBL" id="BC017075">
    <property type="protein sequence ID" value="AAH17075.3"/>
    <property type="status" value="ALT_INIT"/>
    <property type="molecule type" value="mRNA"/>
</dbReference>
<dbReference type="EMBL" id="BC023614">
    <property type="protein sequence ID" value="AAH23614.2"/>
    <property type="status" value="ALT_INIT"/>
    <property type="molecule type" value="mRNA"/>
</dbReference>
<dbReference type="EMBL" id="BC028050">
    <property type="protein sequence ID" value="AAH28050.1"/>
    <property type="molecule type" value="mRNA"/>
</dbReference>
<dbReference type="EMBL" id="AB014516">
    <property type="protein sequence ID" value="BAA31591.1"/>
    <property type="molecule type" value="mRNA"/>
</dbReference>
<dbReference type="EMBL" id="AY186997">
    <property type="protein sequence ID" value="AAP12462.1"/>
    <property type="status" value="ALT_TERM"/>
    <property type="molecule type" value="mRNA"/>
</dbReference>
<dbReference type="EMBL" id="AY186998">
    <property type="protein sequence ID" value="AAP12463.1"/>
    <property type="status" value="ALT_INIT"/>
    <property type="molecule type" value="mRNA"/>
</dbReference>
<dbReference type="CCDS" id="CCDS32963.1">
    <molecule id="Q6UUV9-1"/>
</dbReference>
<dbReference type="CCDS" id="CCDS42525.1">
    <molecule id="Q6UUV9-2"/>
</dbReference>
<dbReference type="PIR" id="T00388">
    <property type="entry name" value="T00388"/>
</dbReference>
<dbReference type="RefSeq" id="NP_001091952.1">
    <molecule id="Q6UUV9-2"/>
    <property type="nucleotide sequence ID" value="NM_001098482.2"/>
</dbReference>
<dbReference type="RefSeq" id="NP_056136.2">
    <molecule id="Q6UUV9-1"/>
    <property type="nucleotide sequence ID" value="NM_015321.3"/>
</dbReference>
<dbReference type="PDB" id="7D8H">
    <property type="method" value="X-ray"/>
    <property type="resolution" value="2.42 A"/>
    <property type="chains" value="B=59-69"/>
</dbReference>
<dbReference type="PDB" id="7D8P">
    <property type="method" value="X-ray"/>
    <property type="resolution" value="2.00 A"/>
    <property type="chains" value="C/D=146-156"/>
</dbReference>
<dbReference type="PDB" id="7D9V">
    <property type="method" value="X-ray"/>
    <property type="resolution" value="2.21 A"/>
    <property type="chains" value="C/D=240-250"/>
</dbReference>
<dbReference type="PDBsum" id="7D8H"/>
<dbReference type="PDBsum" id="7D8P"/>
<dbReference type="PDBsum" id="7D9V"/>
<dbReference type="SMR" id="Q6UUV9"/>
<dbReference type="BioGRID" id="116952">
    <property type="interactions" value="27"/>
</dbReference>
<dbReference type="FunCoup" id="Q6UUV9">
    <property type="interactions" value="2019"/>
</dbReference>
<dbReference type="IntAct" id="Q6UUV9">
    <property type="interactions" value="13"/>
</dbReference>
<dbReference type="STRING" id="9606.ENSP00000345001"/>
<dbReference type="GlyGen" id="Q6UUV9">
    <property type="glycosylation" value="1 site, 1 N-linked glycan (1 site)"/>
</dbReference>
<dbReference type="iPTMnet" id="Q6UUV9"/>
<dbReference type="PhosphoSitePlus" id="Q6UUV9"/>
<dbReference type="BioMuta" id="CRTC1"/>
<dbReference type="DMDM" id="68565585"/>
<dbReference type="jPOST" id="Q6UUV9"/>
<dbReference type="MassIVE" id="Q6UUV9"/>
<dbReference type="PaxDb" id="9606-ENSP00000345001"/>
<dbReference type="PeptideAtlas" id="Q6UUV9"/>
<dbReference type="ProteomicsDB" id="67426">
    <molecule id="Q6UUV9-1"/>
</dbReference>
<dbReference type="ProteomicsDB" id="67427">
    <molecule id="Q6UUV9-2"/>
</dbReference>
<dbReference type="ProteomicsDB" id="67428">
    <molecule id="Q6UUV9-3"/>
</dbReference>
<dbReference type="Pumba" id="Q6UUV9"/>
<dbReference type="Antibodypedia" id="15141">
    <property type="antibodies" value="373 antibodies from 41 providers"/>
</dbReference>
<dbReference type="DNASU" id="23373"/>
<dbReference type="Ensembl" id="ENST00000321949.13">
    <molecule id="Q6UUV9-1"/>
    <property type="protein sequence ID" value="ENSP00000323332.7"/>
    <property type="gene ID" value="ENSG00000105662.16"/>
</dbReference>
<dbReference type="Ensembl" id="ENST00000338797.10">
    <molecule id="Q6UUV9-2"/>
    <property type="protein sequence ID" value="ENSP00000345001.5"/>
    <property type="gene ID" value="ENSG00000105662.16"/>
</dbReference>
<dbReference type="GeneID" id="23373"/>
<dbReference type="KEGG" id="hsa:23373"/>
<dbReference type="MANE-Select" id="ENST00000321949.13">
    <property type="protein sequence ID" value="ENSP00000323332.7"/>
    <property type="RefSeq nucleotide sequence ID" value="NM_015321.3"/>
    <property type="RefSeq protein sequence ID" value="NP_056136.2"/>
</dbReference>
<dbReference type="UCSC" id="uc002nkb.5">
    <molecule id="Q6UUV9-1"/>
    <property type="organism name" value="human"/>
</dbReference>
<dbReference type="AGR" id="HGNC:16062"/>
<dbReference type="CTD" id="23373"/>
<dbReference type="DisGeNET" id="23373"/>
<dbReference type="GeneCards" id="CRTC1"/>
<dbReference type="HGNC" id="HGNC:16062">
    <property type="gene designation" value="CRTC1"/>
</dbReference>
<dbReference type="HPA" id="ENSG00000105662">
    <property type="expression patterns" value="Tissue enhanced (brain)"/>
</dbReference>
<dbReference type="MIM" id="607536">
    <property type="type" value="gene"/>
</dbReference>
<dbReference type="neXtProt" id="NX_Q6UUV9"/>
<dbReference type="OpenTargets" id="ENSG00000105662"/>
<dbReference type="PharmGKB" id="PA30730"/>
<dbReference type="VEuPathDB" id="HostDB:ENSG00000105662"/>
<dbReference type="eggNOG" id="ENOG502QU41">
    <property type="taxonomic scope" value="Eukaryota"/>
</dbReference>
<dbReference type="GeneTree" id="ENSGT00390000010652"/>
<dbReference type="HOGENOM" id="CLU_019357_2_0_1"/>
<dbReference type="InParanoid" id="Q6UUV9"/>
<dbReference type="OMA" id="DWPKFAQ"/>
<dbReference type="OrthoDB" id="8947034at2759"/>
<dbReference type="PAN-GO" id="Q6UUV9">
    <property type="GO annotations" value="5 GO annotations based on evolutionary models"/>
</dbReference>
<dbReference type="PhylomeDB" id="Q6UUV9"/>
<dbReference type="TreeFam" id="TF321571"/>
<dbReference type="PathwayCommons" id="Q6UUV9"/>
<dbReference type="Reactome" id="R-HSA-2151201">
    <property type="pathway name" value="Transcriptional activation of mitochondrial biogenesis"/>
</dbReference>
<dbReference type="Reactome" id="R-HSA-400253">
    <property type="pathway name" value="Circadian Clock"/>
</dbReference>
<dbReference type="Reactome" id="R-HSA-9707616">
    <property type="pathway name" value="Heme signaling"/>
</dbReference>
<dbReference type="SignaLink" id="Q6UUV9"/>
<dbReference type="SIGNOR" id="Q6UUV9"/>
<dbReference type="BioGRID-ORCS" id="23373">
    <property type="hits" value="18 hits in 1157 CRISPR screens"/>
</dbReference>
<dbReference type="ChiTaRS" id="CRTC1">
    <property type="organism name" value="human"/>
</dbReference>
<dbReference type="GeneWiki" id="CRTC1"/>
<dbReference type="GenomeRNAi" id="23373"/>
<dbReference type="Pharos" id="Q6UUV9">
    <property type="development level" value="Tbio"/>
</dbReference>
<dbReference type="PRO" id="PR:Q6UUV9"/>
<dbReference type="Proteomes" id="UP000005640">
    <property type="component" value="Chromosome 19"/>
</dbReference>
<dbReference type="RNAct" id="Q6UUV9">
    <property type="molecule type" value="protein"/>
</dbReference>
<dbReference type="Bgee" id="ENSG00000105662">
    <property type="expression patterns" value="Expressed in type B pancreatic cell and 153 other cell types or tissues"/>
</dbReference>
<dbReference type="ExpressionAtlas" id="Q6UUV9">
    <property type="expression patterns" value="baseline and differential"/>
</dbReference>
<dbReference type="GO" id="GO:0005737">
    <property type="term" value="C:cytoplasm"/>
    <property type="evidence" value="ECO:0000318"/>
    <property type="project" value="GO_Central"/>
</dbReference>
<dbReference type="GO" id="GO:0005829">
    <property type="term" value="C:cytosol"/>
    <property type="evidence" value="ECO:0000314"/>
    <property type="project" value="HPA"/>
</dbReference>
<dbReference type="GO" id="GO:0016604">
    <property type="term" value="C:nuclear body"/>
    <property type="evidence" value="ECO:0000314"/>
    <property type="project" value="HPA"/>
</dbReference>
<dbReference type="GO" id="GO:0005654">
    <property type="term" value="C:nucleoplasm"/>
    <property type="evidence" value="ECO:0000314"/>
    <property type="project" value="HPA"/>
</dbReference>
<dbReference type="GO" id="GO:0005634">
    <property type="term" value="C:nucleus"/>
    <property type="evidence" value="ECO:0000314"/>
    <property type="project" value="UniProtKB"/>
</dbReference>
<dbReference type="GO" id="GO:0005886">
    <property type="term" value="C:plasma membrane"/>
    <property type="evidence" value="ECO:0000314"/>
    <property type="project" value="HPA"/>
</dbReference>
<dbReference type="GO" id="GO:0008140">
    <property type="term" value="F:cAMP response element binding protein binding"/>
    <property type="evidence" value="ECO:0000314"/>
    <property type="project" value="UniProtKB"/>
</dbReference>
<dbReference type="GO" id="GO:0003713">
    <property type="term" value="F:transcription coactivator activity"/>
    <property type="evidence" value="ECO:0000318"/>
    <property type="project" value="GO_Central"/>
</dbReference>
<dbReference type="GO" id="GO:0071320">
    <property type="term" value="P:cellular response to cAMP"/>
    <property type="evidence" value="ECO:0000318"/>
    <property type="project" value="GO_Central"/>
</dbReference>
<dbReference type="GO" id="GO:0097009">
    <property type="term" value="P:energy homeostasis"/>
    <property type="evidence" value="ECO:0007669"/>
    <property type="project" value="Ensembl"/>
</dbReference>
<dbReference type="GO" id="GO:0043153">
    <property type="term" value="P:entrainment of circadian clock by photoperiod"/>
    <property type="evidence" value="ECO:0000250"/>
    <property type="project" value="UniProtKB"/>
</dbReference>
<dbReference type="GO" id="GO:0007613">
    <property type="term" value="P:memory"/>
    <property type="evidence" value="ECO:0007669"/>
    <property type="project" value="Ensembl"/>
</dbReference>
<dbReference type="GO" id="GO:1902631">
    <property type="term" value="P:negative regulation of membrane hyperpolarization"/>
    <property type="evidence" value="ECO:0007669"/>
    <property type="project" value="Ensembl"/>
</dbReference>
<dbReference type="GO" id="GO:0032793">
    <property type="term" value="P:positive regulation of CREB transcription factor activity"/>
    <property type="evidence" value="ECO:0000250"/>
    <property type="project" value="UniProtKB"/>
</dbReference>
<dbReference type="GO" id="GO:0045944">
    <property type="term" value="P:positive regulation of transcription by RNA polymerase II"/>
    <property type="evidence" value="ECO:0000314"/>
    <property type="project" value="UniProtKB"/>
</dbReference>
<dbReference type="GO" id="GO:0051289">
    <property type="term" value="P:protein homotetramerization"/>
    <property type="evidence" value="ECO:0007669"/>
    <property type="project" value="InterPro"/>
</dbReference>
<dbReference type="GO" id="GO:0048511">
    <property type="term" value="P:rhythmic process"/>
    <property type="evidence" value="ECO:0007669"/>
    <property type="project" value="UniProtKB-KW"/>
</dbReference>
<dbReference type="InterPro" id="IPR024786">
    <property type="entry name" value="TORC"/>
</dbReference>
<dbReference type="InterPro" id="IPR024785">
    <property type="entry name" value="TORC_C"/>
</dbReference>
<dbReference type="InterPro" id="IPR024784">
    <property type="entry name" value="TORC_M"/>
</dbReference>
<dbReference type="InterPro" id="IPR024783">
    <property type="entry name" value="TORC_N"/>
</dbReference>
<dbReference type="PANTHER" id="PTHR13589">
    <property type="entry name" value="CREB-REGULATED TRANSCRIPTION COACTIVATOR"/>
    <property type="match status" value="1"/>
</dbReference>
<dbReference type="PANTHER" id="PTHR13589:SF14">
    <property type="entry name" value="CREB-REGULATED TRANSCRIPTION COACTIVATOR 1"/>
    <property type="match status" value="1"/>
</dbReference>
<dbReference type="Pfam" id="PF12886">
    <property type="entry name" value="TORC_C"/>
    <property type="match status" value="1"/>
</dbReference>
<dbReference type="Pfam" id="PF12885">
    <property type="entry name" value="TORC_M"/>
    <property type="match status" value="1"/>
</dbReference>
<dbReference type="Pfam" id="PF12884">
    <property type="entry name" value="TORC_N"/>
    <property type="match status" value="1"/>
</dbReference>
<protein>
    <recommendedName>
        <fullName>CREB-regulated transcription coactivator 1</fullName>
    </recommendedName>
    <alternativeName>
        <fullName>Mucoepidermoid carcinoma translocated protein 1</fullName>
    </alternativeName>
    <alternativeName>
        <fullName>Transducer of regulated cAMP response element-binding protein 1</fullName>
        <shortName>TORC-1</shortName>
        <shortName>Transducer of CREB protein 1</shortName>
    </alternativeName>
</protein>
<organism>
    <name type="scientific">Homo sapiens</name>
    <name type="common">Human</name>
    <dbReference type="NCBI Taxonomy" id="9606"/>
    <lineage>
        <taxon>Eukaryota</taxon>
        <taxon>Metazoa</taxon>
        <taxon>Chordata</taxon>
        <taxon>Craniata</taxon>
        <taxon>Vertebrata</taxon>
        <taxon>Euteleostomi</taxon>
        <taxon>Mammalia</taxon>
        <taxon>Eutheria</taxon>
        <taxon>Euarchontoglires</taxon>
        <taxon>Primates</taxon>
        <taxon>Haplorrhini</taxon>
        <taxon>Catarrhini</taxon>
        <taxon>Hominidae</taxon>
        <taxon>Homo</taxon>
    </lineage>
</organism>
<comment type="function">
    <text evidence="2 3 14">Transcriptional coactivator for CREB1 which activates transcription through both consensus and variant cAMP response element (CRE) sites. Acts as a coactivator, in the SIK/TORC signaling pathway, being active when dephosphorylated and acts independently of CREB1 'Ser-133' phosphorylation. Enhances the interaction of CREB1 with TAF4. Regulates the expression of specific CREB-activated genes such as the steroidogenic gene, StAR. Potent coactivator of PGC1alpha and inducer of mitochondrial biogenesis in muscle cells. In the hippocampus, involved in late-phase long-term potentiation (L-LTP) maintenance at the Schaffer collateral-CA1 synapses. May be required for dendritic growth of developing cortical neurons (By similarity). In concert with SIK1, regulates the light-induced entrainment of the circadian clock. In response to light stimulus, coactivates the CREB-mediated transcription of PER1 which plays an important role in the photic entrainment of the circadian clock.</text>
</comment>
<comment type="function">
    <text evidence="11">(Microbial infection) Plays a role of coactivator for TAX activation of the human T-cell leukemia virus type 1 (HTLV-1) long terminal repeats (LTR).</text>
</comment>
<comment type="subunit">
    <text evidence="7 15">Binds, as a tetramer, through its N-terminal region, with the bZIP domain of CREB1 (PubMed:14536081). 'Arg-314' in the bZIP domain of CREB1 is essential for this interaction (PubMed:14536081). Interaction, via its C-terminal, with TAF4, enhances recruitment of TAF4 to CREB1 (PubMed:14536081). Interacts with 14-3-3 proteins, including YWHAE/14-3-3 epsilon (PubMed:30611118). Interacts with calmodulin-dependent catalytic subunit PPP3CA/calcineurin A (PubMed:30611118).</text>
</comment>
<comment type="subunit">
    <text evidence="11">(Microbial infection) Interacts with HTLV1 Tax.</text>
</comment>
<comment type="interaction">
    <interactant intactId="EBI-1644259">
        <id>Q6UUV9</id>
    </interactant>
    <interactant intactId="EBI-711855">
        <id>P16220</id>
        <label>CREB1</label>
    </interactant>
    <organismsDiffer>false</organismsDiffer>
    <experiments>6</experiments>
</comment>
<comment type="interaction">
    <interactant intactId="EBI-1644259">
        <id>Q6UUV9</id>
    </interactant>
    <interactant intactId="EBI-356498">
        <id>P62258</id>
        <label>YWHAE</label>
    </interactant>
    <organismsDiffer>false</organismsDiffer>
    <experiments>5</experiments>
</comment>
<comment type="subcellular location">
    <subcellularLocation>
        <location evidence="10">Cytoplasm</location>
    </subcellularLocation>
    <subcellularLocation>
        <location evidence="10">Nucleus</location>
    </subcellularLocation>
    <text evidence="3 10 12">Cytoplasmic when phosphorylated by SIK or AMPK and when sequestered by 14-3-3 proteins (PubMed:16817901). Translocated to the nucleus on Ser-151 dephosphorylation, instigated by a number of factors including calcium ion and cAMP levels (PubMed:15589160). Light stimulation triggers a nuclear accumulation in the suprachiasmatic nucleus (SCN) of the brain (By similarity).</text>
</comment>
<comment type="alternative products">
    <event type="alternative splicing"/>
    <isoform>
        <id>Q6UUV9-1</id>
        <name evidence="6">1</name>
        <sequence type="displayed"/>
    </isoform>
    <isoform>
        <id>Q6UUV9-2</id>
        <name evidence="21">2</name>
        <sequence type="described" ref="VSP_051749"/>
    </isoform>
    <isoform>
        <id>Q6UUV9-3</id>
        <name evidence="5">3</name>
        <sequence type="described" ref="VSP_051750 VSP_051751"/>
    </isoform>
</comment>
<comment type="tissue specificity">
    <text evidence="8 13">Highly expressed in adult and fetal brain. Located to specific regions such as the prefrontal cortex and cerebellum. Very low expression in other tissues such as heart, spleen, lung, skeletal muscle, salivary gland, ovary and kidney.</text>
</comment>
<comment type="PTM">
    <text evidence="3">Phosphorylation/dephosphorylation states of Ser-151 are required for regulating transduction of CREB activity. TORCs are inactive when phosphorylated, and active when dephosphorylated at this site. This primary site of phosphorylation is mediated by SIKs (SIK1 and SIK2), is regulated by cAMP and calcium levels and is dependent on the phosphorylation of SIKs by LKB1 (By similarity).</text>
</comment>
<comment type="disease">
    <text>A chromosomal aberration involving CRTC1 is found in mucoepidermoid carcinomas, benign Warthin tumors and clear cell hidradenomas. Translocation t(11;19)(q21;p13) with MAML2. The fusion protein consists of the N-terminus of CRTC1 joined to the C-terminus of MAML2. The reciprocal fusion protein consisting of the N-terminus of MAML2 joined to the C-terminus of CRTC1 has been detected in a small number of mucoepidermoid carcinomas.</text>
</comment>
<comment type="similarity">
    <text evidence="21">Belongs to the TORC family.</text>
</comment>
<comment type="sequence caution" evidence="21">
    <conflict type="erroneous initiation">
        <sequence resource="EMBL-CDS" id="AAH17075"/>
    </conflict>
</comment>
<comment type="sequence caution" evidence="21">
    <conflict type="erroneous initiation">
        <sequence resource="EMBL-CDS" id="AAH23614"/>
    </conflict>
</comment>
<comment type="sequence caution" evidence="21">
    <conflict type="erroneous initiation">
        <sequence resource="EMBL-CDS" id="AAP12463"/>
    </conflict>
</comment>
<comment type="online information" name="Atlas of Genetics and Cytogenetics in Oncology and Haematology">
    <link uri="https://atlasgeneticsoncology.org/gene/471/CRTC1"/>
</comment>
<keyword id="KW-0002">3D-structure</keyword>
<keyword id="KW-0010">Activator</keyword>
<keyword id="KW-0025">Alternative splicing</keyword>
<keyword id="KW-0090">Biological rhythms</keyword>
<keyword id="KW-0160">Chromosomal rearrangement</keyword>
<keyword id="KW-0963">Cytoplasm</keyword>
<keyword id="KW-0945">Host-virus interaction</keyword>
<keyword id="KW-0539">Nucleus</keyword>
<keyword id="KW-0597">Phosphoprotein</keyword>
<keyword id="KW-1267">Proteomics identification</keyword>
<keyword id="KW-1185">Reference proteome</keyword>
<keyword id="KW-0804">Transcription</keyword>
<keyword id="KW-0805">Transcription regulation</keyword>
<gene>
    <name evidence="30" type="primary">CRTC1</name>
    <name evidence="28" type="synonym">KIAA0616</name>
    <name evidence="30" type="synonym">MECT1</name>
    <name evidence="27" type="synonym">TORC1</name>
    <name evidence="19" type="synonym">WAMTP1</name>
</gene>